<name>MURE_CHESB</name>
<keyword id="KW-0067">ATP-binding</keyword>
<keyword id="KW-0131">Cell cycle</keyword>
<keyword id="KW-0132">Cell division</keyword>
<keyword id="KW-0133">Cell shape</keyword>
<keyword id="KW-0961">Cell wall biogenesis/degradation</keyword>
<keyword id="KW-0963">Cytoplasm</keyword>
<keyword id="KW-0436">Ligase</keyword>
<keyword id="KW-0460">Magnesium</keyword>
<keyword id="KW-0547">Nucleotide-binding</keyword>
<keyword id="KW-0573">Peptidoglycan synthesis</keyword>
<proteinExistence type="inferred from homology"/>
<organism>
    <name type="scientific">Chelativorans sp. (strain BNC1)</name>
    <dbReference type="NCBI Taxonomy" id="266779"/>
    <lineage>
        <taxon>Bacteria</taxon>
        <taxon>Pseudomonadati</taxon>
        <taxon>Pseudomonadota</taxon>
        <taxon>Alphaproteobacteria</taxon>
        <taxon>Hyphomicrobiales</taxon>
        <taxon>Phyllobacteriaceae</taxon>
        <taxon>Chelativorans</taxon>
    </lineage>
</organism>
<feature type="chain" id="PRO_1000012372" description="UDP-N-acetylmuramoyl-L-alanyl-D-glutamate--2,6-diaminopimelate ligase">
    <location>
        <begin position="1"/>
        <end position="483"/>
    </location>
</feature>
<feature type="short sequence motif" description="Meso-diaminopimelate recognition motif">
    <location>
        <begin position="404"/>
        <end position="407"/>
    </location>
</feature>
<feature type="binding site" evidence="1">
    <location>
        <position position="29"/>
    </location>
    <ligand>
        <name>UDP-N-acetyl-alpha-D-muramoyl-L-alanyl-D-glutamate</name>
        <dbReference type="ChEBI" id="CHEBI:83900"/>
    </ligand>
</feature>
<feature type="binding site" evidence="1">
    <location>
        <begin position="107"/>
        <end position="113"/>
    </location>
    <ligand>
        <name>ATP</name>
        <dbReference type="ChEBI" id="CHEBI:30616"/>
    </ligand>
</feature>
<feature type="binding site" evidence="1">
    <location>
        <begin position="149"/>
        <end position="150"/>
    </location>
    <ligand>
        <name>UDP-N-acetyl-alpha-D-muramoyl-L-alanyl-D-glutamate</name>
        <dbReference type="ChEBI" id="CHEBI:83900"/>
    </ligand>
</feature>
<feature type="binding site" evidence="1">
    <location>
        <position position="176"/>
    </location>
    <ligand>
        <name>UDP-N-acetyl-alpha-D-muramoyl-L-alanyl-D-glutamate</name>
        <dbReference type="ChEBI" id="CHEBI:83900"/>
    </ligand>
</feature>
<feature type="binding site" evidence="1">
    <location>
        <position position="182"/>
    </location>
    <ligand>
        <name>UDP-N-acetyl-alpha-D-muramoyl-L-alanyl-D-glutamate</name>
        <dbReference type="ChEBI" id="CHEBI:83900"/>
    </ligand>
</feature>
<feature type="binding site" evidence="1">
    <location>
        <position position="184"/>
    </location>
    <ligand>
        <name>UDP-N-acetyl-alpha-D-muramoyl-L-alanyl-D-glutamate</name>
        <dbReference type="ChEBI" id="CHEBI:83900"/>
    </ligand>
</feature>
<feature type="binding site" evidence="1">
    <location>
        <position position="380"/>
    </location>
    <ligand>
        <name>meso-2,6-diaminopimelate</name>
        <dbReference type="ChEBI" id="CHEBI:57791"/>
    </ligand>
</feature>
<feature type="binding site" evidence="1">
    <location>
        <begin position="404"/>
        <end position="407"/>
    </location>
    <ligand>
        <name>meso-2,6-diaminopimelate</name>
        <dbReference type="ChEBI" id="CHEBI:57791"/>
    </ligand>
</feature>
<feature type="binding site" evidence="1">
    <location>
        <position position="452"/>
    </location>
    <ligand>
        <name>meso-2,6-diaminopimelate</name>
        <dbReference type="ChEBI" id="CHEBI:57791"/>
    </ligand>
</feature>
<feature type="binding site" evidence="1">
    <location>
        <position position="456"/>
    </location>
    <ligand>
        <name>meso-2,6-diaminopimelate</name>
        <dbReference type="ChEBI" id="CHEBI:57791"/>
    </ligand>
</feature>
<feature type="modified residue" description="N6-carboxylysine" evidence="1">
    <location>
        <position position="216"/>
    </location>
</feature>
<sequence>MKLGEFADILPLSGSIAGETTISGLASDSRRVNAGDLFFALQGSKADGAAYAADAAGRGAVAIIARPGTVGDVGVPVIEADDPRHVLALASARLYGAQPATMVAVTGTSGKTSVAAFTRQIWEKAGLAAASIGTTGVVAPGRDEYGELTTPDPVSLHKLLRELADAGVTHASMEASSHGLDQRRLDGVKLAAGGFTNLGRDHMDYHPTVEHYHQSKMRLFKTLLPKGAPAVIFADDPWSEPTEKVALAAGLQLLTVGRRGTFLTIKRVEHERHRQRTEIEHEGMIYDIMLPLAGDFQVGNALVAAGLAISTGLPADKAVAALEHLKGASGRLELTGTTEDGAQIYVDYAHKPDALENVLQAVRPFTTGRVIVVFGCGGDRDPGKRPIMGEIARRLADVVIVTDDNPRSEVPAEIRRAILEAVPEATEIGDRREAIRTAVAMLNSGDTLIVAGKGHEIGQEIAGTKLPFSDHEEVRRALKERTA</sequence>
<comment type="function">
    <text evidence="1">Catalyzes the addition of meso-diaminopimelic acid to the nucleotide precursor UDP-N-acetylmuramoyl-L-alanyl-D-glutamate (UMAG) in the biosynthesis of bacterial cell-wall peptidoglycan.</text>
</comment>
<comment type="catalytic activity">
    <reaction evidence="1">
        <text>UDP-N-acetyl-alpha-D-muramoyl-L-alanyl-D-glutamate + meso-2,6-diaminopimelate + ATP = UDP-N-acetyl-alpha-D-muramoyl-L-alanyl-gamma-D-glutamyl-meso-2,6-diaminopimelate + ADP + phosphate + H(+)</text>
        <dbReference type="Rhea" id="RHEA:23676"/>
        <dbReference type="ChEBI" id="CHEBI:15378"/>
        <dbReference type="ChEBI" id="CHEBI:30616"/>
        <dbReference type="ChEBI" id="CHEBI:43474"/>
        <dbReference type="ChEBI" id="CHEBI:57791"/>
        <dbReference type="ChEBI" id="CHEBI:83900"/>
        <dbReference type="ChEBI" id="CHEBI:83905"/>
        <dbReference type="ChEBI" id="CHEBI:456216"/>
        <dbReference type="EC" id="6.3.2.13"/>
    </reaction>
</comment>
<comment type="cofactor">
    <cofactor evidence="1">
        <name>Mg(2+)</name>
        <dbReference type="ChEBI" id="CHEBI:18420"/>
    </cofactor>
</comment>
<comment type="pathway">
    <text evidence="1">Cell wall biogenesis; peptidoglycan biosynthesis.</text>
</comment>
<comment type="subcellular location">
    <subcellularLocation>
        <location evidence="1">Cytoplasm</location>
    </subcellularLocation>
</comment>
<comment type="PTM">
    <text evidence="1">Carboxylation is probably crucial for Mg(2+) binding and, consequently, for the gamma-phosphate positioning of ATP.</text>
</comment>
<comment type="similarity">
    <text evidence="1">Belongs to the MurCDEF family. MurE subfamily.</text>
</comment>
<reference key="1">
    <citation type="submission" date="2006-06" db="EMBL/GenBank/DDBJ databases">
        <title>Complete sequence of chromosome of Mesorhizobium sp. BNC1.</title>
        <authorList>
            <consortium name="US DOE Joint Genome Institute"/>
            <person name="Copeland A."/>
            <person name="Lucas S."/>
            <person name="Lapidus A."/>
            <person name="Barry K."/>
            <person name="Detter J.C."/>
            <person name="Glavina del Rio T."/>
            <person name="Hammon N."/>
            <person name="Israni S."/>
            <person name="Dalin E."/>
            <person name="Tice H."/>
            <person name="Pitluck S."/>
            <person name="Chertkov O."/>
            <person name="Brettin T."/>
            <person name="Bruce D."/>
            <person name="Han C."/>
            <person name="Tapia R."/>
            <person name="Gilna P."/>
            <person name="Schmutz J."/>
            <person name="Larimer F."/>
            <person name="Land M."/>
            <person name="Hauser L."/>
            <person name="Kyrpides N."/>
            <person name="Mikhailova N."/>
            <person name="Richardson P."/>
        </authorList>
    </citation>
    <scope>NUCLEOTIDE SEQUENCE [LARGE SCALE GENOMIC DNA]</scope>
    <source>
        <strain>BNC1</strain>
    </source>
</reference>
<accession>Q11GS0</accession>
<protein>
    <recommendedName>
        <fullName evidence="1">UDP-N-acetylmuramoyl-L-alanyl-D-glutamate--2,6-diaminopimelate ligase</fullName>
        <ecNumber evidence="1">6.3.2.13</ecNumber>
    </recommendedName>
    <alternativeName>
        <fullName evidence="1">Meso-A2pm-adding enzyme</fullName>
    </alternativeName>
    <alternativeName>
        <fullName evidence="1">Meso-diaminopimelate-adding enzyme</fullName>
    </alternativeName>
    <alternativeName>
        <fullName evidence="1">UDP-MurNAc-L-Ala-D-Glu:meso-diaminopimelate ligase</fullName>
    </alternativeName>
    <alternativeName>
        <fullName evidence="1">UDP-MurNAc-tripeptide synthetase</fullName>
    </alternativeName>
    <alternativeName>
        <fullName evidence="1">UDP-N-acetylmuramyl-tripeptide synthetase</fullName>
    </alternativeName>
</protein>
<evidence type="ECO:0000255" key="1">
    <source>
        <dbReference type="HAMAP-Rule" id="MF_00208"/>
    </source>
</evidence>
<gene>
    <name evidence="1" type="primary">murE</name>
    <name type="ordered locus">Meso_2012</name>
</gene>
<dbReference type="EC" id="6.3.2.13" evidence="1"/>
<dbReference type="EMBL" id="CP000390">
    <property type="protein sequence ID" value="ABG63405.1"/>
    <property type="molecule type" value="Genomic_DNA"/>
</dbReference>
<dbReference type="SMR" id="Q11GS0"/>
<dbReference type="STRING" id="266779.Meso_2012"/>
<dbReference type="KEGG" id="mes:Meso_2012"/>
<dbReference type="eggNOG" id="COG0769">
    <property type="taxonomic scope" value="Bacteria"/>
</dbReference>
<dbReference type="HOGENOM" id="CLU_022291_3_1_5"/>
<dbReference type="OrthoDB" id="9800958at2"/>
<dbReference type="UniPathway" id="UPA00219"/>
<dbReference type="GO" id="GO:0005737">
    <property type="term" value="C:cytoplasm"/>
    <property type="evidence" value="ECO:0007669"/>
    <property type="project" value="UniProtKB-SubCell"/>
</dbReference>
<dbReference type="GO" id="GO:0005524">
    <property type="term" value="F:ATP binding"/>
    <property type="evidence" value="ECO:0007669"/>
    <property type="project" value="UniProtKB-UniRule"/>
</dbReference>
<dbReference type="GO" id="GO:0000287">
    <property type="term" value="F:magnesium ion binding"/>
    <property type="evidence" value="ECO:0007669"/>
    <property type="project" value="UniProtKB-UniRule"/>
</dbReference>
<dbReference type="GO" id="GO:0008765">
    <property type="term" value="F:UDP-N-acetylmuramoylalanyl-D-glutamate-2,6-diaminopimelate ligase activity"/>
    <property type="evidence" value="ECO:0007669"/>
    <property type="project" value="UniProtKB-UniRule"/>
</dbReference>
<dbReference type="GO" id="GO:0051301">
    <property type="term" value="P:cell division"/>
    <property type="evidence" value="ECO:0007669"/>
    <property type="project" value="UniProtKB-KW"/>
</dbReference>
<dbReference type="GO" id="GO:0071555">
    <property type="term" value="P:cell wall organization"/>
    <property type="evidence" value="ECO:0007669"/>
    <property type="project" value="UniProtKB-KW"/>
</dbReference>
<dbReference type="GO" id="GO:0009252">
    <property type="term" value="P:peptidoglycan biosynthetic process"/>
    <property type="evidence" value="ECO:0007669"/>
    <property type="project" value="UniProtKB-UniRule"/>
</dbReference>
<dbReference type="GO" id="GO:0008360">
    <property type="term" value="P:regulation of cell shape"/>
    <property type="evidence" value="ECO:0007669"/>
    <property type="project" value="UniProtKB-KW"/>
</dbReference>
<dbReference type="Gene3D" id="3.90.190.20">
    <property type="entry name" value="Mur ligase, C-terminal domain"/>
    <property type="match status" value="1"/>
</dbReference>
<dbReference type="Gene3D" id="3.40.1190.10">
    <property type="entry name" value="Mur-like, catalytic domain"/>
    <property type="match status" value="1"/>
</dbReference>
<dbReference type="Gene3D" id="3.40.1390.10">
    <property type="entry name" value="MurE/MurF, N-terminal domain"/>
    <property type="match status" value="1"/>
</dbReference>
<dbReference type="HAMAP" id="MF_00208">
    <property type="entry name" value="MurE"/>
    <property type="match status" value="1"/>
</dbReference>
<dbReference type="InterPro" id="IPR036565">
    <property type="entry name" value="Mur-like_cat_sf"/>
</dbReference>
<dbReference type="InterPro" id="IPR004101">
    <property type="entry name" value="Mur_ligase_C"/>
</dbReference>
<dbReference type="InterPro" id="IPR036615">
    <property type="entry name" value="Mur_ligase_C_dom_sf"/>
</dbReference>
<dbReference type="InterPro" id="IPR013221">
    <property type="entry name" value="Mur_ligase_cen"/>
</dbReference>
<dbReference type="InterPro" id="IPR000713">
    <property type="entry name" value="Mur_ligase_N"/>
</dbReference>
<dbReference type="InterPro" id="IPR035911">
    <property type="entry name" value="MurE/MurF_N"/>
</dbReference>
<dbReference type="InterPro" id="IPR005761">
    <property type="entry name" value="UDP-N-AcMur-Glu-dNH2Pim_ligase"/>
</dbReference>
<dbReference type="NCBIfam" id="TIGR01085">
    <property type="entry name" value="murE"/>
    <property type="match status" value="1"/>
</dbReference>
<dbReference type="NCBIfam" id="NF001124">
    <property type="entry name" value="PRK00139.1-2"/>
    <property type="match status" value="1"/>
</dbReference>
<dbReference type="NCBIfam" id="NF001126">
    <property type="entry name" value="PRK00139.1-4"/>
    <property type="match status" value="1"/>
</dbReference>
<dbReference type="PANTHER" id="PTHR23135">
    <property type="entry name" value="MUR LIGASE FAMILY MEMBER"/>
    <property type="match status" value="1"/>
</dbReference>
<dbReference type="PANTHER" id="PTHR23135:SF4">
    <property type="entry name" value="UDP-N-ACETYLMURAMOYL-L-ALANYL-D-GLUTAMATE--2,6-DIAMINOPIMELATE LIGASE MURE HOMOLOG, CHLOROPLASTIC"/>
    <property type="match status" value="1"/>
</dbReference>
<dbReference type="Pfam" id="PF01225">
    <property type="entry name" value="Mur_ligase"/>
    <property type="match status" value="1"/>
</dbReference>
<dbReference type="Pfam" id="PF02875">
    <property type="entry name" value="Mur_ligase_C"/>
    <property type="match status" value="1"/>
</dbReference>
<dbReference type="Pfam" id="PF08245">
    <property type="entry name" value="Mur_ligase_M"/>
    <property type="match status" value="1"/>
</dbReference>
<dbReference type="SUPFAM" id="SSF53623">
    <property type="entry name" value="MurD-like peptide ligases, catalytic domain"/>
    <property type="match status" value="1"/>
</dbReference>
<dbReference type="SUPFAM" id="SSF53244">
    <property type="entry name" value="MurD-like peptide ligases, peptide-binding domain"/>
    <property type="match status" value="1"/>
</dbReference>
<dbReference type="SUPFAM" id="SSF63418">
    <property type="entry name" value="MurE/MurF N-terminal domain"/>
    <property type="match status" value="1"/>
</dbReference>